<sequence length="508" mass="60378">MEEIQRYLHLERSEQQDFLYPLIFQEYIYTFAHDRGFSRSIWSENRGYENKSSLLIVKRLINRMDQENHFLISPNDSNQNPFWACNKNFYSQILSEGFAFSVEIPFSRRLISCLEKKIVKFQNLRSIHSTFPFLEDNFSHLNFVLDILIPHPVHVEILVQTLRYWVKDASSLHFLRFFLNEYCNWNSVITPTKASSSFSKRNQRLFLFLYNSHVCEYESIFVFLRNQSSYLRSTSSGVLLERIYFYGKIKRLVNVFVKLKDFQANLWLVKEPYLHSIRYQRKSILASKGTSLFMNKWKCYLVTFWQSHFSLWFHPRRISINQLSNYSLDFLGYHSSVRMNPSVVRSQILENAFRINNAIKKFDTLVPIIPLVASLAKAKFCNVLGHPISKPVWADLSDSNILDRFGRICRNLSHYHSGSSKKKSLYRIKYILRLSCARTLARKHKSTVRTFLKRLGSVFLEEFLMSEENVLFLTFPKASSTFRRVYRSRIWYLDILSINDLANYKYKL</sequence>
<gene>
    <name evidence="1" type="primary">matK</name>
</gene>
<dbReference type="EMBL" id="AJ429353">
    <property type="protein sequence ID" value="CAD22249.1"/>
    <property type="molecule type" value="Genomic_DNA"/>
</dbReference>
<dbReference type="EMBL" id="AF531820">
    <property type="protein sequence ID" value="AAP87880.1"/>
    <property type="molecule type" value="Genomic_DNA"/>
</dbReference>
<dbReference type="GO" id="GO:0009507">
    <property type="term" value="C:chloroplast"/>
    <property type="evidence" value="ECO:0007669"/>
    <property type="project" value="UniProtKB-SubCell"/>
</dbReference>
<dbReference type="GO" id="GO:0003723">
    <property type="term" value="F:RNA binding"/>
    <property type="evidence" value="ECO:0007669"/>
    <property type="project" value="UniProtKB-KW"/>
</dbReference>
<dbReference type="GO" id="GO:0006397">
    <property type="term" value="P:mRNA processing"/>
    <property type="evidence" value="ECO:0007669"/>
    <property type="project" value="UniProtKB-KW"/>
</dbReference>
<dbReference type="GO" id="GO:0008380">
    <property type="term" value="P:RNA splicing"/>
    <property type="evidence" value="ECO:0007669"/>
    <property type="project" value="UniProtKB-UniRule"/>
</dbReference>
<dbReference type="GO" id="GO:0008033">
    <property type="term" value="P:tRNA processing"/>
    <property type="evidence" value="ECO:0007669"/>
    <property type="project" value="UniProtKB-KW"/>
</dbReference>
<dbReference type="HAMAP" id="MF_01390">
    <property type="entry name" value="MatK"/>
    <property type="match status" value="1"/>
</dbReference>
<dbReference type="InterPro" id="IPR024937">
    <property type="entry name" value="Domain_X"/>
</dbReference>
<dbReference type="InterPro" id="IPR002866">
    <property type="entry name" value="Maturase_MatK"/>
</dbReference>
<dbReference type="InterPro" id="IPR024942">
    <property type="entry name" value="Maturase_MatK_N"/>
</dbReference>
<dbReference type="PANTHER" id="PTHR34811">
    <property type="entry name" value="MATURASE K"/>
    <property type="match status" value="1"/>
</dbReference>
<dbReference type="PANTHER" id="PTHR34811:SF1">
    <property type="entry name" value="MATURASE K"/>
    <property type="match status" value="1"/>
</dbReference>
<dbReference type="Pfam" id="PF01348">
    <property type="entry name" value="Intron_maturas2"/>
    <property type="match status" value="1"/>
</dbReference>
<dbReference type="Pfam" id="PF01824">
    <property type="entry name" value="MatK_N"/>
    <property type="match status" value="1"/>
</dbReference>
<organism>
    <name type="scientific">Verbena rigida</name>
    <name type="common">Tuberous vervain</name>
    <dbReference type="NCBI Taxonomy" id="185780"/>
    <lineage>
        <taxon>Eukaryota</taxon>
        <taxon>Viridiplantae</taxon>
        <taxon>Streptophyta</taxon>
        <taxon>Embryophyta</taxon>
        <taxon>Tracheophyta</taxon>
        <taxon>Spermatophyta</taxon>
        <taxon>Magnoliopsida</taxon>
        <taxon>eudicotyledons</taxon>
        <taxon>Gunneridae</taxon>
        <taxon>Pentapetalae</taxon>
        <taxon>asterids</taxon>
        <taxon>lamiids</taxon>
        <taxon>Lamiales</taxon>
        <taxon>Verbenaceae</taxon>
        <taxon>Verbeneae</taxon>
        <taxon>Verbena</taxon>
    </lineage>
</organism>
<comment type="function">
    <text evidence="1">Usually encoded in the trnK tRNA gene intron. Probably assists in splicing its own and other chloroplast group II introns.</text>
</comment>
<comment type="subcellular location">
    <subcellularLocation>
        <location>Plastid</location>
        <location>Chloroplast</location>
    </subcellularLocation>
</comment>
<comment type="similarity">
    <text evidence="1">Belongs to the intron maturase 2 family. MatK subfamily.</text>
</comment>
<reference key="1">
    <citation type="journal article" date="2002" name="Mol. Phylogenet. Evol.">
        <title>Phylogenetics of asterids based on 3 coding and 3 non-coding chloroplast DNA markers and the utility of non-coding DNA at higher taxonomic levels.</title>
        <authorList>
            <person name="Bremer B."/>
            <person name="Bremer K."/>
            <person name="Heidari N."/>
            <person name="Erixon P."/>
            <person name="Olmstead R.G."/>
            <person name="Anderberg A.A."/>
            <person name="Kallersjo M."/>
            <person name="Barkhordarian E."/>
        </authorList>
    </citation>
    <scope>NUCLEOTIDE SEQUENCE [GENOMIC DNA]</scope>
</reference>
<reference key="2">
    <citation type="journal article" date="2004" name="Plant Biol.">
        <title>Evolution of carnivory in lentibulariaceae and the Lamiales.</title>
        <authorList>
            <person name="Mueller K.F."/>
            <person name="Borsch T."/>
            <person name="Legendre L."/>
            <person name="Porembski S."/>
            <person name="Theisen I."/>
            <person name="Barthlott W."/>
        </authorList>
    </citation>
    <scope>NUCLEOTIDE SEQUENCE [GENOMIC DNA]</scope>
</reference>
<protein>
    <recommendedName>
        <fullName evidence="1">Maturase K</fullName>
    </recommendedName>
    <alternativeName>
        <fullName evidence="1">Intron maturase</fullName>
    </alternativeName>
</protein>
<geneLocation type="chloroplast"/>
<name>MATK_VERRI</name>
<accession>Q7YKL5</accession>
<accession>Q8M8U3</accession>
<keyword id="KW-0150">Chloroplast</keyword>
<keyword id="KW-0507">mRNA processing</keyword>
<keyword id="KW-0934">Plastid</keyword>
<keyword id="KW-0694">RNA-binding</keyword>
<keyword id="KW-0819">tRNA processing</keyword>
<evidence type="ECO:0000255" key="1">
    <source>
        <dbReference type="HAMAP-Rule" id="MF_01390"/>
    </source>
</evidence>
<evidence type="ECO:0000305" key="2"/>
<proteinExistence type="inferred from homology"/>
<feature type="chain" id="PRO_0000143780" description="Maturase K">
    <location>
        <begin position="1"/>
        <end position="508"/>
    </location>
</feature>
<feature type="sequence conflict" description="In Ref. 1; CAD22249." evidence="2" ref="1">
    <original>H</original>
    <variation>Q</variation>
    <location>
        <position position="9"/>
    </location>
</feature>
<feature type="sequence conflict" description="In Ref. 1; CAD22249." evidence="2" ref="1">
    <original>Q</original>
    <variation>H</variation>
    <location>
        <position position="16"/>
    </location>
</feature>
<feature type="sequence conflict" description="In Ref. 1; CAD22249." evidence="2" ref="1">
    <original>W</original>
    <variation>L</variation>
    <location>
        <position position="42"/>
    </location>
</feature>
<feature type="sequence conflict" description="In Ref. 1; CAD22249." evidence="2" ref="1">
    <original>S</original>
    <variation>I</variation>
    <location>
        <position position="101"/>
    </location>
</feature>